<dbReference type="EMBL" id="AK127703">
    <property type="status" value="NOT_ANNOTATED_CDS"/>
    <property type="molecule type" value="mRNA"/>
</dbReference>
<dbReference type="EMBL" id="AP002448">
    <property type="status" value="NOT_ANNOTATED_CDS"/>
    <property type="molecule type" value="Genomic_DNA"/>
</dbReference>
<dbReference type="RefSeq" id="NP_001289573.1">
    <property type="nucleotide sequence ID" value="NM_001302644.1"/>
</dbReference>
<dbReference type="RefSeq" id="NP_001289574.1">
    <property type="nucleotide sequence ID" value="NM_001302645.1"/>
</dbReference>
<dbReference type="RefSeq" id="NP_001289575.1">
    <property type="nucleotide sequence ID" value="NM_001302646.1"/>
</dbReference>
<dbReference type="RefSeq" id="NP_001289576.1">
    <property type="nucleotide sequence ID" value="NM_001302647.1"/>
</dbReference>
<dbReference type="RefSeq" id="NP_001289577.1">
    <property type="nucleotide sequence ID" value="NM_001302648.1"/>
</dbReference>
<dbReference type="RefSeq" id="NP_997312.1">
    <property type="nucleotide sequence ID" value="NM_207429.3"/>
</dbReference>
<dbReference type="FunCoup" id="Q6ZS62">
    <property type="interactions" value="1"/>
</dbReference>
<dbReference type="iPTMnet" id="Q6ZS62"/>
<dbReference type="BioMuta" id="HGNC:33789"/>
<dbReference type="DMDM" id="74711342"/>
<dbReference type="PeptideAtlas" id="Q6ZS62"/>
<dbReference type="DNASU" id="399948"/>
<dbReference type="GeneID" id="399948"/>
<dbReference type="AGR" id="HGNC:33789"/>
<dbReference type="CTD" id="399948"/>
<dbReference type="DisGeNET" id="399948"/>
<dbReference type="GeneCards" id="COLCA1"/>
<dbReference type="HGNC" id="HGNC:33789">
    <property type="gene designation" value="COLCA1"/>
</dbReference>
<dbReference type="MIM" id="615693">
    <property type="type" value="gene"/>
</dbReference>
<dbReference type="neXtProt" id="NX_Q6ZS62"/>
<dbReference type="InParanoid" id="Q6ZS62"/>
<dbReference type="PAN-GO" id="Q6ZS62">
    <property type="GO annotations" value="0 GO annotations based on evolutionary models"/>
</dbReference>
<dbReference type="PhylomeDB" id="Q6ZS62"/>
<dbReference type="TreeFam" id="TF354066"/>
<dbReference type="PathwayCommons" id="Q6ZS62"/>
<dbReference type="BioGRID-ORCS" id="399948">
    <property type="hits" value="3 hits in 236 CRISPR screens"/>
</dbReference>
<dbReference type="ChiTaRS" id="COLCA1">
    <property type="organism name" value="human"/>
</dbReference>
<dbReference type="GenomeRNAi" id="399948"/>
<dbReference type="Pharos" id="Q6ZS62">
    <property type="development level" value="Tdark"/>
</dbReference>
<dbReference type="PRO" id="PR:Q6ZS62"/>
<dbReference type="Proteomes" id="UP000005640">
    <property type="component" value="Unplaced"/>
</dbReference>
<dbReference type="RNAct" id="Q6ZS62">
    <property type="molecule type" value="protein"/>
</dbReference>
<dbReference type="GO" id="GO:0016020">
    <property type="term" value="C:membrane"/>
    <property type="evidence" value="ECO:0000314"/>
    <property type="project" value="UniProtKB"/>
</dbReference>
<reference key="1">
    <citation type="journal article" date="2004" name="Nat. Genet.">
        <title>Complete sequencing and characterization of 21,243 full-length human cDNAs.</title>
        <authorList>
            <person name="Ota T."/>
            <person name="Suzuki Y."/>
            <person name="Nishikawa T."/>
            <person name="Otsuki T."/>
            <person name="Sugiyama T."/>
            <person name="Irie R."/>
            <person name="Wakamatsu A."/>
            <person name="Hayashi K."/>
            <person name="Sato H."/>
            <person name="Nagai K."/>
            <person name="Kimura K."/>
            <person name="Makita H."/>
            <person name="Sekine M."/>
            <person name="Obayashi M."/>
            <person name="Nishi T."/>
            <person name="Shibahara T."/>
            <person name="Tanaka T."/>
            <person name="Ishii S."/>
            <person name="Yamamoto J."/>
            <person name="Saito K."/>
            <person name="Kawai Y."/>
            <person name="Isono Y."/>
            <person name="Nakamura Y."/>
            <person name="Nagahari K."/>
            <person name="Murakami K."/>
            <person name="Yasuda T."/>
            <person name="Iwayanagi T."/>
            <person name="Wagatsuma M."/>
            <person name="Shiratori A."/>
            <person name="Sudo H."/>
            <person name="Hosoiri T."/>
            <person name="Kaku Y."/>
            <person name="Kodaira H."/>
            <person name="Kondo H."/>
            <person name="Sugawara M."/>
            <person name="Takahashi M."/>
            <person name="Kanda K."/>
            <person name="Yokoi T."/>
            <person name="Furuya T."/>
            <person name="Kikkawa E."/>
            <person name="Omura Y."/>
            <person name="Abe K."/>
            <person name="Kamihara K."/>
            <person name="Katsuta N."/>
            <person name="Sato K."/>
            <person name="Tanikawa M."/>
            <person name="Yamazaki M."/>
            <person name="Ninomiya K."/>
            <person name="Ishibashi T."/>
            <person name="Yamashita H."/>
            <person name="Murakawa K."/>
            <person name="Fujimori K."/>
            <person name="Tanai H."/>
            <person name="Kimata M."/>
            <person name="Watanabe M."/>
            <person name="Hiraoka S."/>
            <person name="Chiba Y."/>
            <person name="Ishida S."/>
            <person name="Ono Y."/>
            <person name="Takiguchi S."/>
            <person name="Watanabe S."/>
            <person name="Yosida M."/>
            <person name="Hotuta T."/>
            <person name="Kusano J."/>
            <person name="Kanehori K."/>
            <person name="Takahashi-Fujii A."/>
            <person name="Hara H."/>
            <person name="Tanase T.-O."/>
            <person name="Nomura Y."/>
            <person name="Togiya S."/>
            <person name="Komai F."/>
            <person name="Hara R."/>
            <person name="Takeuchi K."/>
            <person name="Arita M."/>
            <person name="Imose N."/>
            <person name="Musashino K."/>
            <person name="Yuuki H."/>
            <person name="Oshima A."/>
            <person name="Sasaki N."/>
            <person name="Aotsuka S."/>
            <person name="Yoshikawa Y."/>
            <person name="Matsunawa H."/>
            <person name="Ichihara T."/>
            <person name="Shiohata N."/>
            <person name="Sano S."/>
            <person name="Moriya S."/>
            <person name="Momiyama H."/>
            <person name="Satoh N."/>
            <person name="Takami S."/>
            <person name="Terashima Y."/>
            <person name="Suzuki O."/>
            <person name="Nakagawa S."/>
            <person name="Senoh A."/>
            <person name="Mizoguchi H."/>
            <person name="Goto Y."/>
            <person name="Shimizu F."/>
            <person name="Wakebe H."/>
            <person name="Hishigaki H."/>
            <person name="Watanabe T."/>
            <person name="Sugiyama A."/>
            <person name="Takemoto M."/>
            <person name="Kawakami B."/>
            <person name="Yamazaki M."/>
            <person name="Watanabe K."/>
            <person name="Kumagai A."/>
            <person name="Itakura S."/>
            <person name="Fukuzumi Y."/>
            <person name="Fujimori Y."/>
            <person name="Komiyama M."/>
            <person name="Tashiro H."/>
            <person name="Tanigami A."/>
            <person name="Fujiwara T."/>
            <person name="Ono T."/>
            <person name="Yamada K."/>
            <person name="Fujii Y."/>
            <person name="Ozaki K."/>
            <person name="Hirao M."/>
            <person name="Ohmori Y."/>
            <person name="Kawabata A."/>
            <person name="Hikiji T."/>
            <person name="Kobatake N."/>
            <person name="Inagaki H."/>
            <person name="Ikema Y."/>
            <person name="Okamoto S."/>
            <person name="Okitani R."/>
            <person name="Kawakami T."/>
            <person name="Noguchi S."/>
            <person name="Itoh T."/>
            <person name="Shigeta K."/>
            <person name="Senba T."/>
            <person name="Matsumura K."/>
            <person name="Nakajima Y."/>
            <person name="Mizuno T."/>
            <person name="Morinaga M."/>
            <person name="Sasaki M."/>
            <person name="Togashi T."/>
            <person name="Oyama M."/>
            <person name="Hata H."/>
            <person name="Watanabe M."/>
            <person name="Komatsu T."/>
            <person name="Mizushima-Sugano J."/>
            <person name="Satoh T."/>
            <person name="Shirai Y."/>
            <person name="Takahashi Y."/>
            <person name="Nakagawa K."/>
            <person name="Okumura K."/>
            <person name="Nagase T."/>
            <person name="Nomura N."/>
            <person name="Kikuchi H."/>
            <person name="Masuho Y."/>
            <person name="Yamashita R."/>
            <person name="Nakai K."/>
            <person name="Yada T."/>
            <person name="Nakamura Y."/>
            <person name="Ohara O."/>
            <person name="Isogai T."/>
            <person name="Sugano S."/>
        </authorList>
    </citation>
    <scope>NUCLEOTIDE SEQUENCE [LARGE SCALE MRNA]</scope>
</reference>
<reference key="2">
    <citation type="journal article" date="2006" name="Nature">
        <title>Human chromosome 11 DNA sequence and analysis including novel gene identification.</title>
        <authorList>
            <person name="Taylor T.D."/>
            <person name="Noguchi H."/>
            <person name="Totoki Y."/>
            <person name="Toyoda A."/>
            <person name="Kuroki Y."/>
            <person name="Dewar K."/>
            <person name="Lloyd C."/>
            <person name="Itoh T."/>
            <person name="Takeda T."/>
            <person name="Kim D.-W."/>
            <person name="She X."/>
            <person name="Barlow K.F."/>
            <person name="Bloom T."/>
            <person name="Bruford E."/>
            <person name="Chang J.L."/>
            <person name="Cuomo C.A."/>
            <person name="Eichler E."/>
            <person name="FitzGerald M.G."/>
            <person name="Jaffe D.B."/>
            <person name="LaButti K."/>
            <person name="Nicol R."/>
            <person name="Park H.-S."/>
            <person name="Seaman C."/>
            <person name="Sougnez C."/>
            <person name="Yang X."/>
            <person name="Zimmer A.R."/>
            <person name="Zody M.C."/>
            <person name="Birren B.W."/>
            <person name="Nusbaum C."/>
            <person name="Fujiyama A."/>
            <person name="Hattori M."/>
            <person name="Rogers J."/>
            <person name="Lander E.S."/>
            <person name="Sakaki Y."/>
        </authorList>
    </citation>
    <scope>NUCLEOTIDE SEQUENCE [LARGE SCALE GENOMIC DNA]</scope>
</reference>
<reference key="3">
    <citation type="journal article" date="2014" name="Int. J. Cancer">
        <title>Identification of genes expressed by immune cells of the colon that are regulated by colorectal cancer-associated variants.</title>
        <authorList>
            <person name="Peltekova V.D."/>
            <person name="Lemire M."/>
            <person name="Qazi A.M."/>
            <person name="Zaidi S.H."/>
            <person name="Trinh Q.M."/>
            <person name="Bielecki R."/>
            <person name="Rogers M."/>
            <person name="Hodgson L."/>
            <person name="Wang M."/>
            <person name="D'Souza D.J."/>
            <person name="Zandi S."/>
            <person name="Chong T."/>
            <person name="Kwan J.Y."/>
            <person name="Kozak K."/>
            <person name="De Borja R."/>
            <person name="Timms L."/>
            <person name="Rangrej J."/>
            <person name="Volar M."/>
            <person name="Chan-Seng-Yue M."/>
            <person name="Beck T."/>
            <person name="Ash C."/>
            <person name="Lee S."/>
            <person name="Wang J."/>
            <person name="Boutros P.C."/>
            <person name="Stein L.D."/>
            <person name="Dick J.E."/>
            <person name="Gryfe R."/>
            <person name="McPherson J.D."/>
            <person name="Zanke B.W."/>
            <person name="Pollett A."/>
            <person name="Gallinger S."/>
            <person name="Hudson T.J."/>
        </authorList>
    </citation>
    <scope>TISSUE SPECIFICITY</scope>
    <scope>SUBCELLULAR LOCATION</scope>
</reference>
<organism>
    <name type="scientific">Homo sapiens</name>
    <name type="common">Human</name>
    <dbReference type="NCBI Taxonomy" id="9606"/>
    <lineage>
        <taxon>Eukaryota</taxon>
        <taxon>Metazoa</taxon>
        <taxon>Chordata</taxon>
        <taxon>Craniata</taxon>
        <taxon>Vertebrata</taxon>
        <taxon>Euteleostomi</taxon>
        <taxon>Mammalia</taxon>
        <taxon>Eutheria</taxon>
        <taxon>Euarchontoglires</taxon>
        <taxon>Primates</taxon>
        <taxon>Haplorrhini</taxon>
        <taxon>Catarrhini</taxon>
        <taxon>Hominidae</taxon>
        <taxon>Homo</taxon>
    </lineage>
</organism>
<evidence type="ECO:0000255" key="1"/>
<evidence type="ECO:0000269" key="2">
    <source>
    </source>
</evidence>
<keyword id="KW-0472">Membrane</keyword>
<keyword id="KW-1185">Reference proteome</keyword>
<keyword id="KW-0812">Transmembrane</keyword>
<keyword id="KW-1133">Transmembrane helix</keyword>
<name>COLC1_HUMAN</name>
<comment type="subcellular location">
    <subcellularLocation>
        <location evidence="2">Membrane</location>
        <topology evidence="2">Single-pass membrane protein</topology>
    </subcellularLocation>
    <text>Co-localizes with crystalloid granules of eosinophils and granular organelles of mast cells, neutrophils, macrophages and dendritic cells.</text>
</comment>
<comment type="tissue specificity">
    <text evidence="2">Expressed in gastrointestinal and immune tissue, as well as prostate, testis and ovary. Expressed in lamina propria and eosinophils but not in epithelial cells. Expression is greater in benign adjacent tissues than in colon tumors.</text>
</comment>
<accession>Q6ZS62</accession>
<gene>
    <name type="primary">COLCA1</name>
    <name type="synonym">C11orf92</name>
</gene>
<proteinExistence type="evidence at transcript level"/>
<protein>
    <recommendedName>
        <fullName>Colorectal cancer-associated protein 1</fullName>
    </recommendedName>
</protein>
<sequence length="124" mass="13401">MESCSVAQAGVLTSPFMWRWTGMAGALSALDNTIEDDADDQLPCGEGRPGWVRGELLGSQGVCKDSKDLFVPTSSSLYGCFCVGLVSGMAISVLLLASDFRKLDFSRPEPCFEKEASLWFVAQH</sequence>
<feature type="chain" id="PRO_0000340692" description="Colorectal cancer-associated protein 1">
    <location>
        <begin position="1"/>
        <end position="124"/>
    </location>
</feature>
<feature type="transmembrane region" description="Helical" evidence="1">
    <location>
        <begin position="77"/>
        <end position="97"/>
    </location>
</feature>